<organism>
    <name type="scientific">Microcystis aeruginosa (strain NIES-843 / IAM M-2473)</name>
    <dbReference type="NCBI Taxonomy" id="449447"/>
    <lineage>
        <taxon>Bacteria</taxon>
        <taxon>Bacillati</taxon>
        <taxon>Cyanobacteriota</taxon>
        <taxon>Cyanophyceae</taxon>
        <taxon>Oscillatoriophycideae</taxon>
        <taxon>Chroococcales</taxon>
        <taxon>Microcystaceae</taxon>
        <taxon>Microcystis</taxon>
    </lineage>
</organism>
<comment type="catalytic activity">
    <reaction evidence="1">
        <text>urea + 2 H2O + H(+) = hydrogencarbonate + 2 NH4(+)</text>
        <dbReference type="Rhea" id="RHEA:20557"/>
        <dbReference type="ChEBI" id="CHEBI:15377"/>
        <dbReference type="ChEBI" id="CHEBI:15378"/>
        <dbReference type="ChEBI" id="CHEBI:16199"/>
        <dbReference type="ChEBI" id="CHEBI:17544"/>
        <dbReference type="ChEBI" id="CHEBI:28938"/>
        <dbReference type="EC" id="3.5.1.5"/>
    </reaction>
</comment>
<comment type="cofactor">
    <cofactor evidence="1">
        <name>Ni cation</name>
        <dbReference type="ChEBI" id="CHEBI:25516"/>
    </cofactor>
    <text evidence="1">Binds 2 nickel ions per subunit.</text>
</comment>
<comment type="pathway">
    <text evidence="1">Nitrogen metabolism; urea degradation; CO(2) and NH(3) from urea (urease route): step 1/1.</text>
</comment>
<comment type="subunit">
    <text evidence="1">Heterotrimer of UreA (gamma), UreB (beta) and UreC (alpha) subunits. Three heterotrimers associate to form the active enzyme.</text>
</comment>
<comment type="subcellular location">
    <subcellularLocation>
        <location evidence="1">Cytoplasm</location>
    </subcellularLocation>
</comment>
<comment type="PTM">
    <text evidence="1">Carboxylation allows a single lysine to coordinate two nickel ions.</text>
</comment>
<comment type="similarity">
    <text evidence="1">Belongs to the metallo-dependent hydrolases superfamily. Urease alpha subunit family.</text>
</comment>
<proteinExistence type="inferred from homology"/>
<name>URE1_MICAN</name>
<evidence type="ECO:0000255" key="1">
    <source>
        <dbReference type="HAMAP-Rule" id="MF_01953"/>
    </source>
</evidence>
<keyword id="KW-0963">Cytoplasm</keyword>
<keyword id="KW-0378">Hydrolase</keyword>
<keyword id="KW-0479">Metal-binding</keyword>
<keyword id="KW-0533">Nickel</keyword>
<accession>B0JKA1</accession>
<feature type="chain" id="PRO_1000088493" description="Urease subunit alpha">
    <location>
        <begin position="1"/>
        <end position="569"/>
    </location>
</feature>
<feature type="active site" description="Proton donor" evidence="1">
    <location>
        <position position="322"/>
    </location>
</feature>
<feature type="binding site" evidence="1">
    <location>
        <position position="136"/>
    </location>
    <ligand>
        <name>Ni(2+)</name>
        <dbReference type="ChEBI" id="CHEBI:49786"/>
        <label>1</label>
    </ligand>
</feature>
<feature type="binding site" evidence="1">
    <location>
        <position position="138"/>
    </location>
    <ligand>
        <name>Ni(2+)</name>
        <dbReference type="ChEBI" id="CHEBI:49786"/>
        <label>1</label>
    </ligand>
</feature>
<feature type="binding site" description="via carbamate group" evidence="1">
    <location>
        <position position="219"/>
    </location>
    <ligand>
        <name>Ni(2+)</name>
        <dbReference type="ChEBI" id="CHEBI:49786"/>
        <label>1</label>
    </ligand>
</feature>
<feature type="binding site" description="via carbamate group" evidence="1">
    <location>
        <position position="219"/>
    </location>
    <ligand>
        <name>Ni(2+)</name>
        <dbReference type="ChEBI" id="CHEBI:49786"/>
        <label>2</label>
    </ligand>
</feature>
<feature type="binding site" evidence="1">
    <location>
        <position position="221"/>
    </location>
    <ligand>
        <name>substrate</name>
    </ligand>
</feature>
<feature type="binding site" evidence="1">
    <location>
        <position position="248"/>
    </location>
    <ligand>
        <name>Ni(2+)</name>
        <dbReference type="ChEBI" id="CHEBI:49786"/>
        <label>2</label>
    </ligand>
</feature>
<feature type="binding site" evidence="1">
    <location>
        <position position="274"/>
    </location>
    <ligand>
        <name>Ni(2+)</name>
        <dbReference type="ChEBI" id="CHEBI:49786"/>
        <label>2</label>
    </ligand>
</feature>
<feature type="binding site" evidence="1">
    <location>
        <position position="362"/>
    </location>
    <ligand>
        <name>Ni(2+)</name>
        <dbReference type="ChEBI" id="CHEBI:49786"/>
        <label>1</label>
    </ligand>
</feature>
<feature type="modified residue" description="N6-carboxylysine" evidence="1">
    <location>
        <position position="219"/>
    </location>
</feature>
<protein>
    <recommendedName>
        <fullName evidence="1">Urease subunit alpha</fullName>
        <ecNumber evidence="1">3.5.1.5</ecNumber>
    </recommendedName>
    <alternativeName>
        <fullName evidence="1">Urea amidohydrolase subunit alpha</fullName>
    </alternativeName>
</protein>
<gene>
    <name evidence="1" type="primary">ureC</name>
    <name type="ordered locus">MAE_61330</name>
</gene>
<reference key="1">
    <citation type="journal article" date="2007" name="DNA Res.">
        <title>Complete genomic structure of the bloom-forming toxic cyanobacterium Microcystis aeruginosa NIES-843.</title>
        <authorList>
            <person name="Kaneko T."/>
            <person name="Nakajima N."/>
            <person name="Okamoto S."/>
            <person name="Suzuki I."/>
            <person name="Tanabe Y."/>
            <person name="Tamaoki M."/>
            <person name="Nakamura Y."/>
            <person name="Kasai F."/>
            <person name="Watanabe A."/>
            <person name="Kawashima K."/>
            <person name="Kishida Y."/>
            <person name="Ono A."/>
            <person name="Shimizu Y."/>
            <person name="Takahashi C."/>
            <person name="Minami C."/>
            <person name="Fujishiro T."/>
            <person name="Kohara M."/>
            <person name="Katoh M."/>
            <person name="Nakazaki N."/>
            <person name="Nakayama S."/>
            <person name="Yamada M."/>
            <person name="Tabata S."/>
            <person name="Watanabe M.M."/>
        </authorList>
    </citation>
    <scope>NUCLEOTIDE SEQUENCE [LARGE SCALE GENOMIC DNA]</scope>
    <source>
        <strain>NIES-843 / IAM M-247</strain>
    </source>
</reference>
<sequence length="569" mass="61690">MNYRIDRRTYAETYGPTVGDKVRLADTELFIEVEKDFTTYGDEVKFGGGKVIRDGMGQSPISREDGAVDLVITNALILDWWGIVKADVGIKDGKIYKIGKAGNPHIQDNVDIIIGPATEALAGEGMILTAGGIDAHIHFICPQQIETAIASGITTMIGGGTGPATGTNATTCTPGEWHIYRMLEAAEAFPMNLGFLGKGNSSQPEGLAEQVKAGVIGLKLHEDWGTTPAAIDTCLSVADKYDVQVAIHTDTLNEAGFVEATIAAFKNRVIHTYHTEGAGGGHAPDIIRVCGEMNVLPSSTNPTRPYTTNTLEEHLDMLMVCHHLDRSIPEDVAFAESRIRRETIAAEDILHDLGAFSIISSDSQAMGRVGEVIIRTWQTAHKMRVQRGRLTGETGENDNLRARRYIAKYTINPAITHGVSDYVGSIEVGKLADLVLWKPAFFGVKPEIVLKGGLIAWAQMGDANASIPTPQPVYMRPMFASFGGAIAKTSLTFVSKYAMKAGIPEKLKLKKTAVAVSNTRNISKASMKLNDALPRMEVNPETYEVRADGELLICEPATVLPMAQRYFLF</sequence>
<dbReference type="EC" id="3.5.1.5" evidence="1"/>
<dbReference type="EMBL" id="AP009552">
    <property type="protein sequence ID" value="BAG05955.1"/>
    <property type="molecule type" value="Genomic_DNA"/>
</dbReference>
<dbReference type="RefSeq" id="WP_012268266.1">
    <property type="nucleotide sequence ID" value="NC_010296.1"/>
</dbReference>
<dbReference type="SMR" id="B0JKA1"/>
<dbReference type="STRING" id="449447.MAE_61330"/>
<dbReference type="MEROPS" id="M38.982"/>
<dbReference type="PaxDb" id="449447-MAE_61330"/>
<dbReference type="EnsemblBacteria" id="BAG05955">
    <property type="protein sequence ID" value="BAG05955"/>
    <property type="gene ID" value="MAE_61330"/>
</dbReference>
<dbReference type="KEGG" id="mar:MAE_61330"/>
<dbReference type="PATRIC" id="fig|449447.4.peg.5616"/>
<dbReference type="eggNOG" id="COG0804">
    <property type="taxonomic scope" value="Bacteria"/>
</dbReference>
<dbReference type="HOGENOM" id="CLU_000980_0_0_3"/>
<dbReference type="BioCyc" id="MAER449447:MAE_RS26775-MONOMER"/>
<dbReference type="UniPathway" id="UPA00258">
    <property type="reaction ID" value="UER00370"/>
</dbReference>
<dbReference type="Proteomes" id="UP000001510">
    <property type="component" value="Chromosome"/>
</dbReference>
<dbReference type="GO" id="GO:0005737">
    <property type="term" value="C:cytoplasm"/>
    <property type="evidence" value="ECO:0007669"/>
    <property type="project" value="UniProtKB-SubCell"/>
</dbReference>
<dbReference type="GO" id="GO:0016151">
    <property type="term" value="F:nickel cation binding"/>
    <property type="evidence" value="ECO:0007669"/>
    <property type="project" value="UniProtKB-UniRule"/>
</dbReference>
<dbReference type="GO" id="GO:0009039">
    <property type="term" value="F:urease activity"/>
    <property type="evidence" value="ECO:0007669"/>
    <property type="project" value="UniProtKB-UniRule"/>
</dbReference>
<dbReference type="GO" id="GO:0043419">
    <property type="term" value="P:urea catabolic process"/>
    <property type="evidence" value="ECO:0007669"/>
    <property type="project" value="UniProtKB-UniRule"/>
</dbReference>
<dbReference type="CDD" id="cd00375">
    <property type="entry name" value="Urease_alpha"/>
    <property type="match status" value="1"/>
</dbReference>
<dbReference type="Gene3D" id="3.20.20.140">
    <property type="entry name" value="Metal-dependent hydrolases"/>
    <property type="match status" value="1"/>
</dbReference>
<dbReference type="Gene3D" id="2.30.40.10">
    <property type="entry name" value="Urease, subunit C, domain 1"/>
    <property type="match status" value="1"/>
</dbReference>
<dbReference type="HAMAP" id="MF_01953">
    <property type="entry name" value="Urease_alpha"/>
    <property type="match status" value="1"/>
</dbReference>
<dbReference type="InterPro" id="IPR006680">
    <property type="entry name" value="Amidohydro-rel"/>
</dbReference>
<dbReference type="InterPro" id="IPR011059">
    <property type="entry name" value="Metal-dep_hydrolase_composite"/>
</dbReference>
<dbReference type="InterPro" id="IPR032466">
    <property type="entry name" value="Metal_Hydrolase"/>
</dbReference>
<dbReference type="InterPro" id="IPR011612">
    <property type="entry name" value="Urease_alpha_N_dom"/>
</dbReference>
<dbReference type="InterPro" id="IPR050112">
    <property type="entry name" value="Urease_alpha_subunit"/>
</dbReference>
<dbReference type="InterPro" id="IPR017950">
    <property type="entry name" value="Urease_AS"/>
</dbReference>
<dbReference type="InterPro" id="IPR005848">
    <property type="entry name" value="Urease_asu"/>
</dbReference>
<dbReference type="InterPro" id="IPR017951">
    <property type="entry name" value="Urease_asu_c"/>
</dbReference>
<dbReference type="InterPro" id="IPR029754">
    <property type="entry name" value="Urease_Ni-bd"/>
</dbReference>
<dbReference type="NCBIfam" id="NF009685">
    <property type="entry name" value="PRK13206.1"/>
    <property type="match status" value="1"/>
</dbReference>
<dbReference type="NCBIfam" id="NF009686">
    <property type="entry name" value="PRK13207.1"/>
    <property type="match status" value="1"/>
</dbReference>
<dbReference type="NCBIfam" id="TIGR01792">
    <property type="entry name" value="urease_alph"/>
    <property type="match status" value="1"/>
</dbReference>
<dbReference type="PANTHER" id="PTHR43440">
    <property type="entry name" value="UREASE"/>
    <property type="match status" value="1"/>
</dbReference>
<dbReference type="PANTHER" id="PTHR43440:SF1">
    <property type="entry name" value="UREASE"/>
    <property type="match status" value="1"/>
</dbReference>
<dbReference type="Pfam" id="PF01979">
    <property type="entry name" value="Amidohydro_1"/>
    <property type="match status" value="1"/>
</dbReference>
<dbReference type="Pfam" id="PF00449">
    <property type="entry name" value="Urease_alpha"/>
    <property type="match status" value="1"/>
</dbReference>
<dbReference type="PRINTS" id="PR01752">
    <property type="entry name" value="UREASE"/>
</dbReference>
<dbReference type="SUPFAM" id="SSF51338">
    <property type="entry name" value="Composite domain of metallo-dependent hydrolases"/>
    <property type="match status" value="2"/>
</dbReference>
<dbReference type="SUPFAM" id="SSF51556">
    <property type="entry name" value="Metallo-dependent hydrolases"/>
    <property type="match status" value="1"/>
</dbReference>
<dbReference type="PROSITE" id="PS01120">
    <property type="entry name" value="UREASE_1"/>
    <property type="match status" value="1"/>
</dbReference>
<dbReference type="PROSITE" id="PS00145">
    <property type="entry name" value="UREASE_2"/>
    <property type="match status" value="1"/>
</dbReference>
<dbReference type="PROSITE" id="PS51368">
    <property type="entry name" value="UREASE_3"/>
    <property type="match status" value="1"/>
</dbReference>